<feature type="chain" id="PRO_1000125618" description="Glutamate racemase">
    <location>
        <begin position="1"/>
        <end position="266"/>
    </location>
</feature>
<feature type="active site" description="Proton donor/acceptor" evidence="1">
    <location>
        <position position="72"/>
    </location>
</feature>
<feature type="active site" description="Proton donor/acceptor" evidence="1">
    <location>
        <position position="184"/>
    </location>
</feature>
<feature type="binding site" evidence="1">
    <location>
        <begin position="9"/>
        <end position="10"/>
    </location>
    <ligand>
        <name>substrate</name>
    </ligand>
</feature>
<feature type="binding site" evidence="1">
    <location>
        <begin position="41"/>
        <end position="42"/>
    </location>
    <ligand>
        <name>substrate</name>
    </ligand>
</feature>
<feature type="binding site" evidence="1">
    <location>
        <begin position="73"/>
        <end position="74"/>
    </location>
    <ligand>
        <name>substrate</name>
    </ligand>
</feature>
<feature type="binding site" evidence="1">
    <location>
        <begin position="185"/>
        <end position="186"/>
    </location>
    <ligand>
        <name>substrate</name>
    </ligand>
</feature>
<accession>B9DPT7</accession>
<evidence type="ECO:0000255" key="1">
    <source>
        <dbReference type="HAMAP-Rule" id="MF_00258"/>
    </source>
</evidence>
<proteinExistence type="inferred from homology"/>
<dbReference type="EC" id="5.1.1.3" evidence="1"/>
<dbReference type="EMBL" id="AM295250">
    <property type="protein sequence ID" value="CAL27680.1"/>
    <property type="molecule type" value="Genomic_DNA"/>
</dbReference>
<dbReference type="RefSeq" id="WP_015900022.1">
    <property type="nucleotide sequence ID" value="NC_012121.1"/>
</dbReference>
<dbReference type="SMR" id="B9DPT7"/>
<dbReference type="GeneID" id="93795707"/>
<dbReference type="KEGG" id="sca:SCA_0770"/>
<dbReference type="eggNOG" id="COG0796">
    <property type="taxonomic scope" value="Bacteria"/>
</dbReference>
<dbReference type="HOGENOM" id="CLU_052344_0_2_9"/>
<dbReference type="OrthoDB" id="9801055at2"/>
<dbReference type="BioCyc" id="SCAR396513:SCA_RS03900-MONOMER"/>
<dbReference type="UniPathway" id="UPA00219"/>
<dbReference type="Proteomes" id="UP000000444">
    <property type="component" value="Chromosome"/>
</dbReference>
<dbReference type="GO" id="GO:0008881">
    <property type="term" value="F:glutamate racemase activity"/>
    <property type="evidence" value="ECO:0007669"/>
    <property type="project" value="UniProtKB-UniRule"/>
</dbReference>
<dbReference type="GO" id="GO:0071555">
    <property type="term" value="P:cell wall organization"/>
    <property type="evidence" value="ECO:0007669"/>
    <property type="project" value="UniProtKB-KW"/>
</dbReference>
<dbReference type="GO" id="GO:0009252">
    <property type="term" value="P:peptidoglycan biosynthetic process"/>
    <property type="evidence" value="ECO:0007669"/>
    <property type="project" value="UniProtKB-UniRule"/>
</dbReference>
<dbReference type="GO" id="GO:0008360">
    <property type="term" value="P:regulation of cell shape"/>
    <property type="evidence" value="ECO:0007669"/>
    <property type="project" value="UniProtKB-KW"/>
</dbReference>
<dbReference type="FunFam" id="3.40.50.1860:FF:000002">
    <property type="entry name" value="Glutamate racemase"/>
    <property type="match status" value="1"/>
</dbReference>
<dbReference type="Gene3D" id="3.40.50.1860">
    <property type="match status" value="2"/>
</dbReference>
<dbReference type="HAMAP" id="MF_00258">
    <property type="entry name" value="Glu_racemase"/>
    <property type="match status" value="1"/>
</dbReference>
<dbReference type="InterPro" id="IPR015942">
    <property type="entry name" value="Asp/Glu/hydantoin_racemase"/>
</dbReference>
<dbReference type="InterPro" id="IPR001920">
    <property type="entry name" value="Asp/Glu_race"/>
</dbReference>
<dbReference type="InterPro" id="IPR018187">
    <property type="entry name" value="Asp/Glu_racemase_AS_1"/>
</dbReference>
<dbReference type="InterPro" id="IPR033134">
    <property type="entry name" value="Asp/Glu_racemase_AS_2"/>
</dbReference>
<dbReference type="InterPro" id="IPR004391">
    <property type="entry name" value="Glu_race"/>
</dbReference>
<dbReference type="NCBIfam" id="TIGR00067">
    <property type="entry name" value="glut_race"/>
    <property type="match status" value="1"/>
</dbReference>
<dbReference type="NCBIfam" id="NF002035">
    <property type="entry name" value="PRK00865.1-3"/>
    <property type="match status" value="1"/>
</dbReference>
<dbReference type="PANTHER" id="PTHR21198">
    <property type="entry name" value="GLUTAMATE RACEMASE"/>
    <property type="match status" value="1"/>
</dbReference>
<dbReference type="PANTHER" id="PTHR21198:SF2">
    <property type="entry name" value="GLUTAMATE RACEMASE"/>
    <property type="match status" value="1"/>
</dbReference>
<dbReference type="Pfam" id="PF01177">
    <property type="entry name" value="Asp_Glu_race"/>
    <property type="match status" value="1"/>
</dbReference>
<dbReference type="SUPFAM" id="SSF53681">
    <property type="entry name" value="Aspartate/glutamate racemase"/>
    <property type="match status" value="2"/>
</dbReference>
<dbReference type="PROSITE" id="PS00923">
    <property type="entry name" value="ASP_GLU_RACEMASE_1"/>
    <property type="match status" value="1"/>
</dbReference>
<dbReference type="PROSITE" id="PS00924">
    <property type="entry name" value="ASP_GLU_RACEMASE_2"/>
    <property type="match status" value="1"/>
</dbReference>
<gene>
    <name evidence="1" type="primary">murI</name>
    <name type="ordered locus">Sca_0770</name>
</gene>
<sequence>MNKPIGVIDSGVGGLTVAKEIIRQLPNETIYYLGDSARCPYGPREGDEVRKFTVQLAQKLMEFDIKMLVIACNTATAVALDTLKELLPIPVIGVIEPGSRTAIMTTKNNNVMVLGTEGTIKSEAYTKHIKAINPHVDVTGVACPDFVPLVEQMRYHDPVPTNIVIHQTLKNYRTNKADTVILGCTHYPLLFEPLHDYFGGSKTVISSGLETAREVSALLTFSNEHAPYTPNTKHRFFATGDTEHIEYIISQWLKIDDVEVTQVKVD</sequence>
<comment type="function">
    <text evidence="1">Provides the (R)-glutamate required for cell wall biosynthesis.</text>
</comment>
<comment type="catalytic activity">
    <reaction evidence="1">
        <text>L-glutamate = D-glutamate</text>
        <dbReference type="Rhea" id="RHEA:12813"/>
        <dbReference type="ChEBI" id="CHEBI:29985"/>
        <dbReference type="ChEBI" id="CHEBI:29986"/>
        <dbReference type="EC" id="5.1.1.3"/>
    </reaction>
</comment>
<comment type="pathway">
    <text evidence="1">Cell wall biogenesis; peptidoglycan biosynthesis.</text>
</comment>
<comment type="similarity">
    <text evidence="1">Belongs to the aspartate/glutamate racemases family.</text>
</comment>
<reference key="1">
    <citation type="journal article" date="2009" name="Appl. Environ. Microbiol.">
        <title>Genome analysis of the meat starter culture bacterium Staphylococcus carnosus TM300.</title>
        <authorList>
            <person name="Rosenstein R."/>
            <person name="Nerz C."/>
            <person name="Biswas L."/>
            <person name="Resch A."/>
            <person name="Raddatz G."/>
            <person name="Schuster S.C."/>
            <person name="Goetz F."/>
        </authorList>
    </citation>
    <scope>NUCLEOTIDE SEQUENCE [LARGE SCALE GENOMIC DNA]</scope>
    <source>
        <strain>TM300</strain>
    </source>
</reference>
<protein>
    <recommendedName>
        <fullName evidence="1">Glutamate racemase</fullName>
        <ecNumber evidence="1">5.1.1.3</ecNumber>
    </recommendedName>
</protein>
<keyword id="KW-0133">Cell shape</keyword>
<keyword id="KW-0961">Cell wall biogenesis/degradation</keyword>
<keyword id="KW-0413">Isomerase</keyword>
<keyword id="KW-0573">Peptidoglycan synthesis</keyword>
<keyword id="KW-1185">Reference proteome</keyword>
<organism>
    <name type="scientific">Staphylococcus carnosus (strain TM300)</name>
    <dbReference type="NCBI Taxonomy" id="396513"/>
    <lineage>
        <taxon>Bacteria</taxon>
        <taxon>Bacillati</taxon>
        <taxon>Bacillota</taxon>
        <taxon>Bacilli</taxon>
        <taxon>Bacillales</taxon>
        <taxon>Staphylococcaceae</taxon>
        <taxon>Staphylococcus</taxon>
    </lineage>
</organism>
<name>MURI_STACT</name>